<keyword id="KW-0004">4Fe-4S</keyword>
<keyword id="KW-0408">Iron</keyword>
<keyword id="KW-0411">Iron-sulfur</keyword>
<keyword id="KW-0414">Isoprene biosynthesis</keyword>
<keyword id="KW-0479">Metal-binding</keyword>
<keyword id="KW-0560">Oxidoreductase</keyword>
<gene>
    <name evidence="1" type="primary">ispG</name>
    <name type="ordered locus">HPP12_0638</name>
</gene>
<dbReference type="EC" id="1.17.7.3" evidence="1"/>
<dbReference type="EMBL" id="CP001217">
    <property type="protein sequence ID" value="ACJ07791.1"/>
    <property type="molecule type" value="Genomic_DNA"/>
</dbReference>
<dbReference type="SMR" id="B6JLL3"/>
<dbReference type="KEGG" id="hpp:HPP12_0638"/>
<dbReference type="HOGENOM" id="CLU_042258_0_0_7"/>
<dbReference type="UniPathway" id="UPA00056">
    <property type="reaction ID" value="UER00096"/>
</dbReference>
<dbReference type="Proteomes" id="UP000008198">
    <property type="component" value="Chromosome"/>
</dbReference>
<dbReference type="GO" id="GO:0051539">
    <property type="term" value="F:4 iron, 4 sulfur cluster binding"/>
    <property type="evidence" value="ECO:0007669"/>
    <property type="project" value="UniProtKB-UniRule"/>
</dbReference>
<dbReference type="GO" id="GO:0046429">
    <property type="term" value="F:4-hydroxy-3-methylbut-2-en-1-yl diphosphate synthase activity (ferredoxin)"/>
    <property type="evidence" value="ECO:0007669"/>
    <property type="project" value="UniProtKB-UniRule"/>
</dbReference>
<dbReference type="GO" id="GO:0141197">
    <property type="term" value="F:4-hydroxy-3-methylbut-2-enyl-diphosphate synthase activity (flavodoxin)"/>
    <property type="evidence" value="ECO:0007669"/>
    <property type="project" value="UniProtKB-EC"/>
</dbReference>
<dbReference type="GO" id="GO:0005506">
    <property type="term" value="F:iron ion binding"/>
    <property type="evidence" value="ECO:0007669"/>
    <property type="project" value="InterPro"/>
</dbReference>
<dbReference type="GO" id="GO:0019288">
    <property type="term" value="P:isopentenyl diphosphate biosynthetic process, methylerythritol 4-phosphate pathway"/>
    <property type="evidence" value="ECO:0007669"/>
    <property type="project" value="UniProtKB-UniRule"/>
</dbReference>
<dbReference type="GO" id="GO:0016114">
    <property type="term" value="P:terpenoid biosynthetic process"/>
    <property type="evidence" value="ECO:0007669"/>
    <property type="project" value="InterPro"/>
</dbReference>
<dbReference type="FunFam" id="3.20.20.20:FF:000001">
    <property type="entry name" value="4-hydroxy-3-methylbut-2-en-1-yl diphosphate synthase (flavodoxin)"/>
    <property type="match status" value="1"/>
</dbReference>
<dbReference type="FunFam" id="3.30.413.10:FF:000015">
    <property type="entry name" value="4-hydroxy-3-methylbut-2-en-1-yl diphosphate synthase (flavodoxin)"/>
    <property type="match status" value="1"/>
</dbReference>
<dbReference type="Gene3D" id="3.20.20.20">
    <property type="entry name" value="Dihydropteroate synthase-like"/>
    <property type="match status" value="1"/>
</dbReference>
<dbReference type="Gene3D" id="3.30.413.10">
    <property type="entry name" value="Sulfite Reductase Hemoprotein, domain 1"/>
    <property type="match status" value="1"/>
</dbReference>
<dbReference type="HAMAP" id="MF_00159">
    <property type="entry name" value="IspG"/>
    <property type="match status" value="1"/>
</dbReference>
<dbReference type="InterPro" id="IPR011005">
    <property type="entry name" value="Dihydropteroate_synth-like_sf"/>
</dbReference>
<dbReference type="InterPro" id="IPR036849">
    <property type="entry name" value="Enolase-like_C_sf"/>
</dbReference>
<dbReference type="InterPro" id="IPR016425">
    <property type="entry name" value="IspG_bac"/>
</dbReference>
<dbReference type="InterPro" id="IPR004588">
    <property type="entry name" value="IspG_bac-typ"/>
</dbReference>
<dbReference type="InterPro" id="IPR045854">
    <property type="entry name" value="NO2/SO3_Rdtase_4Fe4S_sf"/>
</dbReference>
<dbReference type="NCBIfam" id="TIGR00612">
    <property type="entry name" value="ispG_gcpE"/>
    <property type="match status" value="1"/>
</dbReference>
<dbReference type="NCBIfam" id="NF001540">
    <property type="entry name" value="PRK00366.1"/>
    <property type="match status" value="1"/>
</dbReference>
<dbReference type="PANTHER" id="PTHR30454">
    <property type="entry name" value="4-HYDROXY-3-METHYLBUT-2-EN-1-YL DIPHOSPHATE SYNTHASE"/>
    <property type="match status" value="1"/>
</dbReference>
<dbReference type="PANTHER" id="PTHR30454:SF0">
    <property type="entry name" value="4-HYDROXY-3-METHYLBUT-2-EN-1-YL DIPHOSPHATE SYNTHASE (FERREDOXIN), CHLOROPLASTIC"/>
    <property type="match status" value="1"/>
</dbReference>
<dbReference type="Pfam" id="PF04551">
    <property type="entry name" value="GcpE"/>
    <property type="match status" value="1"/>
</dbReference>
<dbReference type="PIRSF" id="PIRSF004640">
    <property type="entry name" value="IspG"/>
    <property type="match status" value="1"/>
</dbReference>
<dbReference type="SUPFAM" id="SSF51604">
    <property type="entry name" value="Enolase C-terminal domain-like"/>
    <property type="match status" value="1"/>
</dbReference>
<dbReference type="SUPFAM" id="SSF56014">
    <property type="entry name" value="Nitrite and sulphite reductase 4Fe-4S domain-like"/>
    <property type="match status" value="1"/>
</dbReference>
<reference key="1">
    <citation type="submission" date="2008-10" db="EMBL/GenBank/DDBJ databases">
        <title>The complete genome sequence of Helicobacter pylori strain P12.</title>
        <authorList>
            <person name="Fischer W."/>
            <person name="Windhager L."/>
            <person name="Karnholz A."/>
            <person name="Zeiller M."/>
            <person name="Zimmer R."/>
            <person name="Haas R."/>
        </authorList>
    </citation>
    <scope>NUCLEOTIDE SEQUENCE [LARGE SCALE GENOMIC DNA]</scope>
    <source>
        <strain>P12</strain>
    </source>
</reference>
<comment type="function">
    <text evidence="1">Converts 2C-methyl-D-erythritol 2,4-cyclodiphosphate (ME-2,4cPP) into 1-hydroxy-2-methyl-2-(E)-butenyl 4-diphosphate.</text>
</comment>
<comment type="catalytic activity">
    <reaction evidence="1">
        <text>(2E)-4-hydroxy-3-methylbut-2-enyl diphosphate + oxidized [flavodoxin] + H2O + 2 H(+) = 2-C-methyl-D-erythritol 2,4-cyclic diphosphate + reduced [flavodoxin]</text>
        <dbReference type="Rhea" id="RHEA:43604"/>
        <dbReference type="Rhea" id="RHEA-COMP:10622"/>
        <dbReference type="Rhea" id="RHEA-COMP:10623"/>
        <dbReference type="ChEBI" id="CHEBI:15377"/>
        <dbReference type="ChEBI" id="CHEBI:15378"/>
        <dbReference type="ChEBI" id="CHEBI:57618"/>
        <dbReference type="ChEBI" id="CHEBI:58210"/>
        <dbReference type="ChEBI" id="CHEBI:58483"/>
        <dbReference type="ChEBI" id="CHEBI:128753"/>
        <dbReference type="EC" id="1.17.7.3"/>
    </reaction>
</comment>
<comment type="cofactor">
    <cofactor evidence="1">
        <name>[4Fe-4S] cluster</name>
        <dbReference type="ChEBI" id="CHEBI:49883"/>
    </cofactor>
    <text evidence="1">Binds 1 [4Fe-4S] cluster.</text>
</comment>
<comment type="pathway">
    <text evidence="1">Isoprenoid biosynthesis; isopentenyl diphosphate biosynthesis via DXP pathway; isopentenyl diphosphate from 1-deoxy-D-xylulose 5-phosphate: step 5/6.</text>
</comment>
<comment type="similarity">
    <text evidence="1">Belongs to the IspG family.</text>
</comment>
<evidence type="ECO:0000255" key="1">
    <source>
        <dbReference type="HAMAP-Rule" id="MF_00159"/>
    </source>
</evidence>
<protein>
    <recommendedName>
        <fullName evidence="1">4-hydroxy-3-methylbut-2-en-1-yl diphosphate synthase (flavodoxin)</fullName>
        <ecNumber evidence="1">1.17.7.3</ecNumber>
    </recommendedName>
    <alternativeName>
        <fullName evidence="1">1-hydroxy-2-methyl-2-(E)-butenyl 4-diphosphate synthase</fullName>
    </alternativeName>
</protein>
<proteinExistence type="inferred from homology"/>
<organism>
    <name type="scientific">Helicobacter pylori (strain P12)</name>
    <dbReference type="NCBI Taxonomy" id="570508"/>
    <lineage>
        <taxon>Bacteria</taxon>
        <taxon>Pseudomonadati</taxon>
        <taxon>Campylobacterota</taxon>
        <taxon>Epsilonproteobacteria</taxon>
        <taxon>Campylobacterales</taxon>
        <taxon>Helicobacteraceae</taxon>
        <taxon>Helicobacter</taxon>
    </lineage>
</organism>
<feature type="chain" id="PRO_1000097163" description="4-hydroxy-3-methylbut-2-en-1-yl diphosphate synthase (flavodoxin)">
    <location>
        <begin position="1"/>
        <end position="359"/>
    </location>
</feature>
<feature type="binding site" evidence="1">
    <location>
        <position position="264"/>
    </location>
    <ligand>
        <name>[4Fe-4S] cluster</name>
        <dbReference type="ChEBI" id="CHEBI:49883"/>
    </ligand>
</feature>
<feature type="binding site" evidence="1">
    <location>
        <position position="267"/>
    </location>
    <ligand>
        <name>[4Fe-4S] cluster</name>
        <dbReference type="ChEBI" id="CHEBI:49883"/>
    </ligand>
</feature>
<feature type="binding site" evidence="1">
    <location>
        <position position="299"/>
    </location>
    <ligand>
        <name>[4Fe-4S] cluster</name>
        <dbReference type="ChEBI" id="CHEBI:49883"/>
    </ligand>
</feature>
<feature type="binding site" evidence="1">
    <location>
        <position position="306"/>
    </location>
    <ligand>
        <name>[4Fe-4S] cluster</name>
        <dbReference type="ChEBI" id="CHEBI:49883"/>
    </ligand>
</feature>
<sequence length="359" mass="39286">MLENRVKTKQIFIGGVAIGGDAPISTQSMTFSKTADIESTKNQIDRLKLAGADLVRVAVSNEKDALALKELKKVSPLPLIADIHFHYKFALIAAQSVDAIRINPGNIGSKDKIKAVVDACKEKNIPIRIGVNAGSLEKRFDQKYGPTPKGMVESALYNAKLLEDLDFTDFKISLKASDVMRTIEAYRMLRPLVIYPFHLGVTEAGNLFSSSIKSAMALGGLLMEGIGDTMRVSITGELENEIKVARAILRHSGRLKEGINWISCPTCGRIEANLVDMASKVEKRLSHIKTPLDISVMGCVVNALGEAKHADMAIAFGNRSGLIIKEGKVIHKLAEKDLFETFVIEVENLAKEREKSLKD</sequence>
<accession>B6JLL3</accession>
<name>ISPG_HELP2</name>